<dbReference type="EMBL" id="BA000031">
    <property type="protein sequence ID" value="BAC61054.1"/>
    <property type="molecule type" value="Genomic_DNA"/>
</dbReference>
<dbReference type="RefSeq" id="NP_799170.1">
    <property type="nucleotide sequence ID" value="NC_004603.1"/>
</dbReference>
<dbReference type="RefSeq" id="WP_005480073.1">
    <property type="nucleotide sequence ID" value="NC_004603.1"/>
</dbReference>
<dbReference type="SMR" id="Q87L25"/>
<dbReference type="GeneID" id="1190341"/>
<dbReference type="KEGG" id="vpa:VP2791"/>
<dbReference type="PATRIC" id="fig|223926.6.peg.2685"/>
<dbReference type="eggNOG" id="COG3089">
    <property type="taxonomic scope" value="Bacteria"/>
</dbReference>
<dbReference type="HOGENOM" id="CLU_186759_1_0_6"/>
<dbReference type="Proteomes" id="UP000002493">
    <property type="component" value="Chromosome 1"/>
</dbReference>
<dbReference type="Gene3D" id="1.10.10.610">
    <property type="entry name" value="YehU-like"/>
    <property type="match status" value="1"/>
</dbReference>
<dbReference type="HAMAP" id="MF_00690">
    <property type="entry name" value="UPF0270"/>
    <property type="match status" value="1"/>
</dbReference>
<dbReference type="InterPro" id="IPR010648">
    <property type="entry name" value="UPF0270"/>
</dbReference>
<dbReference type="InterPro" id="IPR036685">
    <property type="entry name" value="YehU-like_sf"/>
</dbReference>
<dbReference type="NCBIfam" id="NF003438">
    <property type="entry name" value="PRK04966.1"/>
    <property type="match status" value="1"/>
</dbReference>
<dbReference type="Pfam" id="PF06794">
    <property type="entry name" value="UPF0270"/>
    <property type="match status" value="1"/>
</dbReference>
<dbReference type="PIRSF" id="PIRSF006169">
    <property type="entry name" value="UCP006169"/>
    <property type="match status" value="1"/>
</dbReference>
<dbReference type="SUPFAM" id="SSF118001">
    <property type="entry name" value="YehU-like"/>
    <property type="match status" value="1"/>
</dbReference>
<accession>Q87L25</accession>
<protein>
    <recommendedName>
        <fullName evidence="1">UPF0270 protein VP2791</fullName>
    </recommendedName>
</protein>
<feature type="chain" id="PRO_0000214860" description="UPF0270 protein VP2791">
    <location>
        <begin position="1"/>
        <end position="70"/>
    </location>
</feature>
<gene>
    <name type="ordered locus">VP2791</name>
</gene>
<proteinExistence type="inferred from homology"/>
<organism>
    <name type="scientific">Vibrio parahaemolyticus serotype O3:K6 (strain RIMD 2210633)</name>
    <dbReference type="NCBI Taxonomy" id="223926"/>
    <lineage>
        <taxon>Bacteria</taxon>
        <taxon>Pseudomonadati</taxon>
        <taxon>Pseudomonadota</taxon>
        <taxon>Gammaproteobacteria</taxon>
        <taxon>Vibrionales</taxon>
        <taxon>Vibrionaceae</taxon>
        <taxon>Vibrio</taxon>
    </lineage>
</organism>
<evidence type="ECO:0000255" key="1">
    <source>
        <dbReference type="HAMAP-Rule" id="MF_00690"/>
    </source>
</evidence>
<sequence length="70" mass="8056">MIIPWQDIAPETLENLIREFVLREGTDYGAIEISLQNKIDQVKTQLEKGEAVIVFSELHETVDIQLKAKF</sequence>
<comment type="similarity">
    <text evidence="1">Belongs to the UPF0270 family.</text>
</comment>
<name>Y2791_VIBPA</name>
<reference key="1">
    <citation type="journal article" date="2003" name="Lancet">
        <title>Genome sequence of Vibrio parahaemolyticus: a pathogenic mechanism distinct from that of V. cholerae.</title>
        <authorList>
            <person name="Makino K."/>
            <person name="Oshima K."/>
            <person name="Kurokawa K."/>
            <person name="Yokoyama K."/>
            <person name="Uda T."/>
            <person name="Tagomori K."/>
            <person name="Iijima Y."/>
            <person name="Najima M."/>
            <person name="Nakano M."/>
            <person name="Yamashita A."/>
            <person name="Kubota Y."/>
            <person name="Kimura S."/>
            <person name="Yasunaga T."/>
            <person name="Honda T."/>
            <person name="Shinagawa H."/>
            <person name="Hattori M."/>
            <person name="Iida T."/>
        </authorList>
    </citation>
    <scope>NUCLEOTIDE SEQUENCE [LARGE SCALE GENOMIC DNA]</scope>
    <source>
        <strain>RIMD 2210633</strain>
    </source>
</reference>